<accession>Q0T2M0</accession>
<gene>
    <name evidence="1" type="primary">menH</name>
    <name type="ordered locus">SFV_2334</name>
</gene>
<feature type="chain" id="PRO_0000341927" description="2-succinyl-6-hydroxy-2,4-cyclohexadiene-1-carboxylate synthase">
    <location>
        <begin position="1"/>
        <end position="252"/>
    </location>
</feature>
<sequence>MILHAQAKHGKLGLPWLVFLHGFSGDCHEWQEVGEAFADYSRLYVDLLGHGGSAAISVDGFDDVTDLLRKTLVSYNILDFWLVGYSLGGRVAMMAACQGLAGLCGVIVEGGHPGLQNAEQRAERQRSDRQWAQRFRTEPLTAVFADWYQQPVFASLNDDQRRELVALRSNNNGATLAAMLEATSLAVQPDLRANLSARTFAFYYLCGERDSKFRALAAELAADCHVIPRAGHNAHRENPAGVIASLAQILRF</sequence>
<name>MENH_SHIF8</name>
<keyword id="KW-0456">Lyase</keyword>
<keyword id="KW-0474">Menaquinone biosynthesis</keyword>
<comment type="function">
    <text evidence="1">Catalyzes a proton abstraction reaction that results in 2,5-elimination of pyruvate from 2-succinyl-5-enolpyruvyl-6-hydroxy-3-cyclohexene-1-carboxylate (SEPHCHC) and the formation of 2-succinyl-6-hydroxy-2,4-cyclohexadiene-1-carboxylate (SHCHC).</text>
</comment>
<comment type="catalytic activity">
    <reaction evidence="1">
        <text>5-enolpyruvoyl-6-hydroxy-2-succinyl-cyclohex-3-ene-1-carboxylate = (1R,6R)-6-hydroxy-2-succinyl-cyclohexa-2,4-diene-1-carboxylate + pyruvate</text>
        <dbReference type="Rhea" id="RHEA:25597"/>
        <dbReference type="ChEBI" id="CHEBI:15361"/>
        <dbReference type="ChEBI" id="CHEBI:58689"/>
        <dbReference type="ChEBI" id="CHEBI:58818"/>
        <dbReference type="EC" id="4.2.99.20"/>
    </reaction>
</comment>
<comment type="pathway">
    <text evidence="1">Quinol/quinone metabolism; 1,4-dihydroxy-2-naphthoate biosynthesis; 1,4-dihydroxy-2-naphthoate from chorismate: step 3/7.</text>
</comment>
<comment type="pathway">
    <text evidence="1">Quinol/quinone metabolism; menaquinone biosynthesis.</text>
</comment>
<comment type="subunit">
    <text evidence="1">Monomer.</text>
</comment>
<comment type="similarity">
    <text evidence="1">Belongs to the AB hydrolase superfamily. MenH family.</text>
</comment>
<organism>
    <name type="scientific">Shigella flexneri serotype 5b (strain 8401)</name>
    <dbReference type="NCBI Taxonomy" id="373384"/>
    <lineage>
        <taxon>Bacteria</taxon>
        <taxon>Pseudomonadati</taxon>
        <taxon>Pseudomonadota</taxon>
        <taxon>Gammaproteobacteria</taxon>
        <taxon>Enterobacterales</taxon>
        <taxon>Enterobacteriaceae</taxon>
        <taxon>Shigella</taxon>
    </lineage>
</organism>
<dbReference type="EC" id="4.2.99.20" evidence="1"/>
<dbReference type="EMBL" id="CP000266">
    <property type="protein sequence ID" value="ABF04445.1"/>
    <property type="molecule type" value="Genomic_DNA"/>
</dbReference>
<dbReference type="RefSeq" id="WP_000600480.1">
    <property type="nucleotide sequence ID" value="NC_008258.1"/>
</dbReference>
<dbReference type="SMR" id="Q0T2M0"/>
<dbReference type="ESTHER" id="shifl-YFBB">
    <property type="family name" value="MenH_SHCHC"/>
</dbReference>
<dbReference type="KEGG" id="sfv:SFV_2334"/>
<dbReference type="HOGENOM" id="CLU_020336_38_2_6"/>
<dbReference type="UniPathway" id="UPA00079"/>
<dbReference type="UniPathway" id="UPA01057">
    <property type="reaction ID" value="UER00900"/>
</dbReference>
<dbReference type="Proteomes" id="UP000000659">
    <property type="component" value="Chromosome"/>
</dbReference>
<dbReference type="GO" id="GO:0070205">
    <property type="term" value="F:2-succinyl-6-hydroxy-2,4-cyclohexadiene-1-carboxylate synthase activity"/>
    <property type="evidence" value="ECO:0007669"/>
    <property type="project" value="UniProtKB-UniRule"/>
</dbReference>
<dbReference type="GO" id="GO:0009234">
    <property type="term" value="P:menaquinone biosynthetic process"/>
    <property type="evidence" value="ECO:0007669"/>
    <property type="project" value="UniProtKB-UniRule"/>
</dbReference>
<dbReference type="FunFam" id="3.40.50.1820:FF:000038">
    <property type="entry name" value="2-succinyl-6-hydroxy-2,4-cyclohexadiene-1-carboxylate synthase"/>
    <property type="match status" value="1"/>
</dbReference>
<dbReference type="Gene3D" id="3.40.50.1820">
    <property type="entry name" value="alpha/beta hydrolase"/>
    <property type="match status" value="1"/>
</dbReference>
<dbReference type="HAMAP" id="MF_01660">
    <property type="entry name" value="MenH"/>
    <property type="match status" value="1"/>
</dbReference>
<dbReference type="InterPro" id="IPR000073">
    <property type="entry name" value="AB_hydrolase_1"/>
</dbReference>
<dbReference type="InterPro" id="IPR029058">
    <property type="entry name" value="AB_hydrolase_fold"/>
</dbReference>
<dbReference type="InterPro" id="IPR022485">
    <property type="entry name" value="SHCHC_synthase_MenH"/>
</dbReference>
<dbReference type="NCBIfam" id="TIGR03695">
    <property type="entry name" value="menH_SHCHC"/>
    <property type="match status" value="1"/>
</dbReference>
<dbReference type="NCBIfam" id="NF008340">
    <property type="entry name" value="PRK11126.1"/>
    <property type="match status" value="1"/>
</dbReference>
<dbReference type="PANTHER" id="PTHR42916">
    <property type="entry name" value="2-SUCCINYL-5-ENOLPYRUVYL-6-HYDROXY-3-CYCLOHEXENE-1-CARBOXYLATE SYNTHASE"/>
    <property type="match status" value="1"/>
</dbReference>
<dbReference type="PANTHER" id="PTHR42916:SF1">
    <property type="entry name" value="PROTEIN PHYLLO, CHLOROPLASTIC"/>
    <property type="match status" value="1"/>
</dbReference>
<dbReference type="Pfam" id="PF12697">
    <property type="entry name" value="Abhydrolase_6"/>
    <property type="match status" value="1"/>
</dbReference>
<dbReference type="SUPFAM" id="SSF53474">
    <property type="entry name" value="alpha/beta-Hydrolases"/>
    <property type="match status" value="1"/>
</dbReference>
<proteinExistence type="inferred from homology"/>
<evidence type="ECO:0000255" key="1">
    <source>
        <dbReference type="HAMAP-Rule" id="MF_01660"/>
    </source>
</evidence>
<reference key="1">
    <citation type="journal article" date="2006" name="BMC Genomics">
        <title>Complete genome sequence of Shigella flexneri 5b and comparison with Shigella flexneri 2a.</title>
        <authorList>
            <person name="Nie H."/>
            <person name="Yang F."/>
            <person name="Zhang X."/>
            <person name="Yang J."/>
            <person name="Chen L."/>
            <person name="Wang J."/>
            <person name="Xiong Z."/>
            <person name="Peng J."/>
            <person name="Sun L."/>
            <person name="Dong J."/>
            <person name="Xue Y."/>
            <person name="Xu X."/>
            <person name="Chen S."/>
            <person name="Yao Z."/>
            <person name="Shen Y."/>
            <person name="Jin Q."/>
        </authorList>
    </citation>
    <scope>NUCLEOTIDE SEQUENCE [LARGE SCALE GENOMIC DNA]</scope>
    <source>
        <strain>8401</strain>
    </source>
</reference>
<protein>
    <recommendedName>
        <fullName evidence="1">2-succinyl-6-hydroxy-2,4-cyclohexadiene-1-carboxylate synthase</fullName>
        <shortName evidence="1">SHCHC synthase</shortName>
        <ecNumber evidence="1">4.2.99.20</ecNumber>
    </recommendedName>
</protein>